<sequence>MMDSSILQTLAVLYVLYLLGLIIYRLYFSPLAKFPGPKLAACSKWYEFYYDVILRGQFTFQIQRMHQKYGPIVRINPFELHIQDSTFWDELYTKNKEYERYAWMSGRFGANTTTSSTVKSDLHATRRAPLNPMFSKRSITEFEPIVHEKVGLLSKRLAEYAKNGEVLEMNSAFNAFAGDVISSYCFGFSFDQLKSSGFKDNFHAAYEAVRKFAHFGLQFPVVFIILGLSPRAMLKLVVPNIYKMFVLQKDLQSKISAIIQDHQGNPEDIDSKSSLNTHSHPTIFDELLRSKLPPSEKTVRRLGSEAQQMIGAGVETVAWALTTTVFYLLSDHACLDKLRAELKAAIPDPANLPSSTALEKLPYLSACVKEGIRLSTGVSVRLPRVSPHKPIVYGGWVIPPIVPVSMTTLDVLRDPEVFTSPNNFIPERWLGSPKVANTGESLAKYFVPFGKGPRMCIGINLAYVEMHLTLAMLFRRFTFELYETDVSDVEIKHDFMVPQPKLSTKGVRAKVTGLVVE</sequence>
<proteinExistence type="inferred from homology"/>
<feature type="chain" id="PRO_0000441050" description="Cytochrome P450 monooxygenase sdnE">
    <location>
        <begin position="1"/>
        <end position="517"/>
    </location>
</feature>
<feature type="transmembrane region" description="Helical" evidence="2">
    <location>
        <begin position="4"/>
        <end position="24"/>
    </location>
</feature>
<feature type="transmembrane region" description="Helical" evidence="2">
    <location>
        <begin position="219"/>
        <end position="239"/>
    </location>
</feature>
<feature type="binding site" description="axial binding residue" evidence="1">
    <location>
        <position position="456"/>
    </location>
    <ligand>
        <name>heme</name>
        <dbReference type="ChEBI" id="CHEBI:30413"/>
    </ligand>
    <ligandPart>
        <name>Fe</name>
        <dbReference type="ChEBI" id="CHEBI:18248"/>
    </ligandPart>
</feature>
<feature type="glycosylation site" description="N-linked (GlcNAc...) asparagine" evidence="3">
    <location>
        <position position="111"/>
    </location>
</feature>
<evidence type="ECO:0000250" key="1">
    <source>
        <dbReference type="UniProtKB" id="P04798"/>
    </source>
</evidence>
<evidence type="ECO:0000255" key="2"/>
<evidence type="ECO:0000255" key="3">
    <source>
        <dbReference type="PROSITE-ProRule" id="PRU00498"/>
    </source>
</evidence>
<evidence type="ECO:0000269" key="4">
    <source>
    </source>
</evidence>
<evidence type="ECO:0000303" key="5">
    <source>
    </source>
</evidence>
<evidence type="ECO:0000305" key="6"/>
<evidence type="ECO:0000305" key="7">
    <source>
    </source>
</evidence>
<accession>A0A1B4XBH0</accession>
<gene>
    <name evidence="5" type="primary">sdnE</name>
</gene>
<organism>
    <name type="scientific">Sordaria araneosa</name>
    <name type="common">Pleurage araneosa</name>
    <dbReference type="NCBI Taxonomy" id="573841"/>
    <lineage>
        <taxon>Eukaryota</taxon>
        <taxon>Fungi</taxon>
        <taxon>Dikarya</taxon>
        <taxon>Ascomycota</taxon>
        <taxon>Pezizomycotina</taxon>
        <taxon>Sordariomycetes</taxon>
        <taxon>Sordariomycetidae</taxon>
        <taxon>Sordariales</taxon>
        <taxon>Sordariaceae</taxon>
        <taxon>Sordaria</taxon>
    </lineage>
</organism>
<keyword id="KW-0045">Antibiotic biosynthesis</keyword>
<keyword id="KW-0325">Glycoprotein</keyword>
<keyword id="KW-0349">Heme</keyword>
<keyword id="KW-0408">Iron</keyword>
<keyword id="KW-0472">Membrane</keyword>
<keyword id="KW-0479">Metal-binding</keyword>
<keyword id="KW-0503">Monooxygenase</keyword>
<keyword id="KW-0560">Oxidoreductase</keyword>
<keyword id="KW-0812">Transmembrane</keyword>
<keyword id="KW-1133">Transmembrane helix</keyword>
<comment type="function">
    <text evidence="4">Cytochrome P450 monooxygenase; part of the gene cluster that mediates the biosynthesis of sordarin and hypoxysordarin, glycoside antibiotics with a unique tetracyclic diterpene aglycone structure (PubMed:27072286). First, the geranylgeranyl diphosphate synthase sdnC constructs GGDP from farnesyl diphosphate and isopentenyl diphosphate (PubMed:27072286). The diterpene cyclase sdnA then catalyzes the cyclization of GGDP to afford cycloaraneosene (PubMed:27072286). Cycloaraneosene is then hydroxylated four times by the putative cytochrome P450 monooxygenases sdnB, sdnE, sdnF and sdnH to give a hydroxylated cycloaraneosene derivative such as cycloaraneosene-8,9,13,19-tetraol (PubMed:27072286). Although the order of the hydroxylations is unclear, at least C8, C9 and C13 of the cycloaraneosene skeleton are hydroxylated before the sordaricin formation (PubMed:27072286). Dehydration of the 13-hydroxy group of the hydroxylated cycloaraneosene derivative might be catalyzed by an unassigned hypothetical protein such as sdnG and sdnP to construct the cyclopentadiene moiety (PubMed:27072286). The FAD-dependent oxidoreductase sdnN is proposed to catalyze the oxidation at C9 of the hydroxylated cycloaraneosene derivative and also catalyze the Baeyer-Villiger oxidation to give the lactone intermediate (PubMed:27072286). The presumed lactone intermediate would be hydrolyzed to give an acrolein moiety and a carboxylate moiety (PubMed:27072286). Then, [4+2]cycloaddition would occur between the acrolein moiety and the cyclopentadiene moiety to give sordaricin (PubMed:27072286). SdnN might also be involved in the [4+2]cycloaddition after the hypothesized oxidation to accommodate the oxidized product and prompt the [4+2]cycloaddition (PubMed:27072286). GDP-6-deoxy-D-altrose may be biosynthesized from GDP-D-mannose by the putative GDP-mannose-4,6-dehydratase sdnI and the short-chain dehydrogenase sdnK (PubMed:27072286). The glycosyltransferase sdnJ catalyzes the attachment of 6-deoxy-D-altrose onto the 19-hydroxy group of sordaricin to give 4'-O-demethylsordarin (PubMed:27072286). The methyltransferase sdnD would complete the biosynthesis of sordarin (PubMed:27072286). Sordarin can be further modified into hypoxysordarin (PubMed:27072286). The unique acyl chain at the 3'-hydroxy group of hypoxysordarin would be constructed by an iterative type I PKS sdnO and the trans-acting polyketide methyltransferase sdnL. SdnL would be responsible for the introduction of an alpha-methyl group of the polyketide chain (PubMed:27072286). Alternatively, the beta-lactamase-like protein sdnR might be responsible for the cleavage and transfer of the polyketide chain from the PKS sdnO to sordarin (PubMed:27072286). Two putative cytochrome P450 monooxygenases, sdnQ and sdnT, might catalyze the epoxidations of the polyketide chain to complete the biosynthesis of hypoxysordarin (PubMed:27072286). Transcriptional regulators sdnM and sdnS are presumably encoded for the transcriptional regulation of the expression of the sdn gene cluster (PubMed:27072286).</text>
</comment>
<comment type="cofactor">
    <cofactor evidence="1">
        <name>heme</name>
        <dbReference type="ChEBI" id="CHEBI:30413"/>
    </cofactor>
</comment>
<comment type="pathway">
    <text evidence="7">Antibiotic biosynthesis.</text>
</comment>
<comment type="subcellular location">
    <subcellularLocation>
        <location evidence="2">Membrane</location>
        <topology evidence="2">Multi-pass membrane protein</topology>
    </subcellularLocation>
</comment>
<comment type="similarity">
    <text evidence="6">Belongs to the cytochrome P450 family.</text>
</comment>
<name>SDNE_SORAA</name>
<dbReference type="EC" id="1.-.-.-" evidence="7"/>
<dbReference type="EMBL" id="LC079035">
    <property type="protein sequence ID" value="BAV32149.1"/>
    <property type="molecule type" value="Genomic_DNA"/>
</dbReference>
<dbReference type="SMR" id="A0A1B4XBH0"/>
<dbReference type="GlyCosmos" id="A0A1B4XBH0">
    <property type="glycosylation" value="1 site, No reported glycans"/>
</dbReference>
<dbReference type="GO" id="GO:0016020">
    <property type="term" value="C:membrane"/>
    <property type="evidence" value="ECO:0007669"/>
    <property type="project" value="UniProtKB-SubCell"/>
</dbReference>
<dbReference type="GO" id="GO:0020037">
    <property type="term" value="F:heme binding"/>
    <property type="evidence" value="ECO:0007669"/>
    <property type="project" value="InterPro"/>
</dbReference>
<dbReference type="GO" id="GO:0005506">
    <property type="term" value="F:iron ion binding"/>
    <property type="evidence" value="ECO:0007669"/>
    <property type="project" value="InterPro"/>
</dbReference>
<dbReference type="GO" id="GO:0004497">
    <property type="term" value="F:monooxygenase activity"/>
    <property type="evidence" value="ECO:0007669"/>
    <property type="project" value="UniProtKB-KW"/>
</dbReference>
<dbReference type="GO" id="GO:0016705">
    <property type="term" value="F:oxidoreductase activity, acting on paired donors, with incorporation or reduction of molecular oxygen"/>
    <property type="evidence" value="ECO:0007669"/>
    <property type="project" value="InterPro"/>
</dbReference>
<dbReference type="GO" id="GO:0017000">
    <property type="term" value="P:antibiotic biosynthetic process"/>
    <property type="evidence" value="ECO:0007669"/>
    <property type="project" value="UniProtKB-KW"/>
</dbReference>
<dbReference type="CDD" id="cd11062">
    <property type="entry name" value="CYP58-like"/>
    <property type="match status" value="1"/>
</dbReference>
<dbReference type="Gene3D" id="1.10.630.10">
    <property type="entry name" value="Cytochrome P450"/>
    <property type="match status" value="1"/>
</dbReference>
<dbReference type="InterPro" id="IPR001128">
    <property type="entry name" value="Cyt_P450"/>
</dbReference>
<dbReference type="InterPro" id="IPR017972">
    <property type="entry name" value="Cyt_P450_CS"/>
</dbReference>
<dbReference type="InterPro" id="IPR002401">
    <property type="entry name" value="Cyt_P450_E_grp-I"/>
</dbReference>
<dbReference type="InterPro" id="IPR036396">
    <property type="entry name" value="Cyt_P450_sf"/>
</dbReference>
<dbReference type="InterPro" id="IPR050121">
    <property type="entry name" value="Cytochrome_P450_monoxygenase"/>
</dbReference>
<dbReference type="PANTHER" id="PTHR24305">
    <property type="entry name" value="CYTOCHROME P450"/>
    <property type="match status" value="1"/>
</dbReference>
<dbReference type="PANTHER" id="PTHR24305:SF157">
    <property type="entry name" value="N-ACETYLTRYPTOPHAN 6-HYDROXYLASE IVOC-RELATED"/>
    <property type="match status" value="1"/>
</dbReference>
<dbReference type="Pfam" id="PF00067">
    <property type="entry name" value="p450"/>
    <property type="match status" value="1"/>
</dbReference>
<dbReference type="PRINTS" id="PR00463">
    <property type="entry name" value="EP450I"/>
</dbReference>
<dbReference type="PRINTS" id="PR00385">
    <property type="entry name" value="P450"/>
</dbReference>
<dbReference type="SUPFAM" id="SSF48264">
    <property type="entry name" value="Cytochrome P450"/>
    <property type="match status" value="1"/>
</dbReference>
<dbReference type="PROSITE" id="PS00086">
    <property type="entry name" value="CYTOCHROME_P450"/>
    <property type="match status" value="1"/>
</dbReference>
<protein>
    <recommendedName>
        <fullName evidence="5">Cytochrome P450 monooxygenase sdnE</fullName>
        <ecNumber evidence="7">1.-.-.-</ecNumber>
    </recommendedName>
    <alternativeName>
        <fullName evidence="5">Sordarin/hypoxysordarin biosynthesis cluster protein E</fullName>
    </alternativeName>
</protein>
<reference key="1">
    <citation type="journal article" date="2016" name="J. Antibiot.">
        <title>Genome mining of the sordarin biosynthetic gene cluster from Sordaria araneosa Cain ATCC 36386: characterization of cycloaraneosene synthase and GDP-6-deoxyaltrose transferase.</title>
        <authorList>
            <person name="Kudo F."/>
            <person name="Matsuura Y."/>
            <person name="Hayashi T."/>
            <person name="Fukushima M."/>
            <person name="Eguchi T."/>
        </authorList>
    </citation>
    <scope>NUCLEOTIDE SEQUENCE [GENOMIC DNA]</scope>
    <scope>FUNCTION</scope>
    <scope>PATHWAY</scope>
    <source>
        <strain>ATCC 36386 / NRRL 3196</strain>
    </source>
</reference>